<feature type="chain" id="PRO_0000292216" description="Sensor protein LytS">
    <location>
        <begin position="1"/>
        <end position="584"/>
    </location>
</feature>
<feature type="transmembrane region" description="Helical" evidence="2">
    <location>
        <begin position="2"/>
        <end position="22"/>
    </location>
</feature>
<feature type="transmembrane region" description="Helical" evidence="2">
    <location>
        <begin position="42"/>
        <end position="62"/>
    </location>
</feature>
<feature type="transmembrane region" description="Helical" evidence="2">
    <location>
        <begin position="87"/>
        <end position="107"/>
    </location>
</feature>
<feature type="transmembrane region" description="Helical" evidence="2">
    <location>
        <begin position="114"/>
        <end position="134"/>
    </location>
</feature>
<feature type="transmembrane region" description="Helical" evidence="2">
    <location>
        <begin position="152"/>
        <end position="172"/>
    </location>
</feature>
<feature type="transmembrane region" description="Helical" evidence="2">
    <location>
        <begin position="185"/>
        <end position="205"/>
    </location>
</feature>
<feature type="domain" description="Histidine kinase">
    <location>
        <begin position="379"/>
        <end position="461"/>
    </location>
</feature>
<feature type="modified residue" description="Phosphohistidine; by autocatalysis" evidence="1">
    <location>
        <position position="390"/>
    </location>
</feature>
<accession>Q4L8V3</accession>
<organism>
    <name type="scientific">Staphylococcus haemolyticus (strain JCSC1435)</name>
    <dbReference type="NCBI Taxonomy" id="279808"/>
    <lineage>
        <taxon>Bacteria</taxon>
        <taxon>Bacillati</taxon>
        <taxon>Bacillota</taxon>
        <taxon>Bacilli</taxon>
        <taxon>Bacillales</taxon>
        <taxon>Staphylococcaceae</taxon>
        <taxon>Staphylococcus</taxon>
    </lineage>
</organism>
<keyword id="KW-0067">ATP-binding</keyword>
<keyword id="KW-1003">Cell membrane</keyword>
<keyword id="KW-0418">Kinase</keyword>
<keyword id="KW-0472">Membrane</keyword>
<keyword id="KW-0547">Nucleotide-binding</keyword>
<keyword id="KW-0597">Phosphoprotein</keyword>
<keyword id="KW-0808">Transferase</keyword>
<keyword id="KW-0812">Transmembrane</keyword>
<keyword id="KW-1133">Transmembrane helix</keyword>
<keyword id="KW-0902">Two-component regulatory system</keyword>
<reference key="1">
    <citation type="journal article" date="2005" name="J. Bacteriol.">
        <title>Whole-genome sequencing of Staphylococcus haemolyticus uncovers the extreme plasticity of its genome and the evolution of human-colonizing staphylococcal species.</title>
        <authorList>
            <person name="Takeuchi F."/>
            <person name="Watanabe S."/>
            <person name="Baba T."/>
            <person name="Yuzawa H."/>
            <person name="Ito T."/>
            <person name="Morimoto Y."/>
            <person name="Kuroda M."/>
            <person name="Cui L."/>
            <person name="Takahashi M."/>
            <person name="Ankai A."/>
            <person name="Baba S."/>
            <person name="Fukui S."/>
            <person name="Lee J.C."/>
            <person name="Hiramatsu K."/>
        </authorList>
    </citation>
    <scope>NUCLEOTIDE SEQUENCE [LARGE SCALE GENOMIC DNA]</scope>
    <source>
        <strain>JCSC1435</strain>
    </source>
</reference>
<comment type="function">
    <text evidence="1">Member of the two-component regulatory system LytR/LytS that probably regulates genes involved in cell wall metabolism.</text>
</comment>
<comment type="catalytic activity">
    <reaction>
        <text>ATP + protein L-histidine = ADP + protein N-phospho-L-histidine.</text>
        <dbReference type="EC" id="2.7.13.3"/>
    </reaction>
</comment>
<comment type="subcellular location">
    <subcellularLocation>
        <location evidence="1">Cell membrane</location>
        <topology evidence="1">Multi-pass membrane protein</topology>
    </subcellularLocation>
</comment>
<name>LYTS_STAHJ</name>
<evidence type="ECO:0000250" key="1"/>
<evidence type="ECO:0000255" key="2"/>
<protein>
    <recommendedName>
        <fullName>Sensor protein LytS</fullName>
        <ecNumber>2.7.13.3</ecNumber>
    </recommendedName>
    <alternativeName>
        <fullName>Autolysin sensor kinase</fullName>
    </alternativeName>
</protein>
<gene>
    <name type="primary">lytS</name>
    <name type="ordered locus">SH0613</name>
</gene>
<proteinExistence type="inferred from homology"/>
<sequence length="584" mass="64861">MFNLFILLLERVGLIIIIAYMLMNINHFKTMMGEREKLRSQWQLTILFALFAITSNFTGIEIENGHIVSSNIYYQLNDDASMANTRVLTIGMSGLIGGPFVAIIVGIVSGLSRLYIGGANAYTYLISSIFIALISGFYGYRTMRRYTYPTVLMGAIIGALNEAIQMACILIFANDTASAWSLVQFIALPMILINSIGTAIFLSIILSTLKQEEQTRAIQTHDVFEIANKTLPYFRSGLTEQSARSVAEIILKLMNVSAVAITNRTDILTHVGAASDHHVAKKAIITDLSKEVIKTGHLKEAHSKEEIGCNNPNCSLTSAIVIPLMINQEVAGTLKFYFTNEYENTTSTKQLARGLADIFSSQLELGQAEMQSKLLKDAEIKSLQAQVNPHFFFNSINTISALVRIDSEKARKLLLQLSQFFRSNLQGARNNTITLGKELQQVEAYLALEQARFPDRFTIQYHIDSSCKHVLIPPFVIQILVENAIKHAFKHRRKDNIIDVVAHHDNEELTLTVRDNGSGIDDDKLPLIGQMSVDSETGTGSALENLNRRLIGLYGTKAALHFESTEIGTTVSCHIPSHTIKEDI</sequence>
<dbReference type="EC" id="2.7.13.3"/>
<dbReference type="EMBL" id="AP006716">
    <property type="protein sequence ID" value="BAE03922.1"/>
    <property type="molecule type" value="Genomic_DNA"/>
</dbReference>
<dbReference type="RefSeq" id="WP_011274938.1">
    <property type="nucleotide sequence ID" value="NC_007168.1"/>
</dbReference>
<dbReference type="SMR" id="Q4L8V3"/>
<dbReference type="KEGG" id="sha:SH0613"/>
<dbReference type="eggNOG" id="COG3275">
    <property type="taxonomic scope" value="Bacteria"/>
</dbReference>
<dbReference type="HOGENOM" id="CLU_020473_3_3_9"/>
<dbReference type="OrthoDB" id="9776552at2"/>
<dbReference type="Proteomes" id="UP000000543">
    <property type="component" value="Chromosome"/>
</dbReference>
<dbReference type="GO" id="GO:0005886">
    <property type="term" value="C:plasma membrane"/>
    <property type="evidence" value="ECO:0007669"/>
    <property type="project" value="UniProtKB-SubCell"/>
</dbReference>
<dbReference type="GO" id="GO:0005524">
    <property type="term" value="F:ATP binding"/>
    <property type="evidence" value="ECO:0007669"/>
    <property type="project" value="UniProtKB-KW"/>
</dbReference>
<dbReference type="GO" id="GO:0000155">
    <property type="term" value="F:phosphorelay sensor kinase activity"/>
    <property type="evidence" value="ECO:0007669"/>
    <property type="project" value="InterPro"/>
</dbReference>
<dbReference type="GO" id="GO:0071555">
    <property type="term" value="P:cell wall organization"/>
    <property type="evidence" value="ECO:0007669"/>
    <property type="project" value="InterPro"/>
</dbReference>
<dbReference type="Gene3D" id="3.30.450.40">
    <property type="match status" value="1"/>
</dbReference>
<dbReference type="Gene3D" id="3.30.565.10">
    <property type="entry name" value="Histidine kinase-like ATPase, C-terminal domain"/>
    <property type="match status" value="1"/>
</dbReference>
<dbReference type="InterPro" id="IPR050640">
    <property type="entry name" value="Bact_2-comp_sensor_kinase"/>
</dbReference>
<dbReference type="InterPro" id="IPR003018">
    <property type="entry name" value="GAF"/>
</dbReference>
<dbReference type="InterPro" id="IPR029016">
    <property type="entry name" value="GAF-like_dom_sf"/>
</dbReference>
<dbReference type="InterPro" id="IPR036890">
    <property type="entry name" value="HATPase_C_sf"/>
</dbReference>
<dbReference type="InterPro" id="IPR010559">
    <property type="entry name" value="Sig_transdc_His_kin_internal"/>
</dbReference>
<dbReference type="InterPro" id="IPR011620">
    <property type="entry name" value="Sig_transdc_His_kinase_LytS_TM"/>
</dbReference>
<dbReference type="PANTHER" id="PTHR34220">
    <property type="entry name" value="SENSOR HISTIDINE KINASE YPDA"/>
    <property type="match status" value="1"/>
</dbReference>
<dbReference type="PANTHER" id="PTHR34220:SF7">
    <property type="entry name" value="SENSOR HISTIDINE KINASE YPDA"/>
    <property type="match status" value="1"/>
</dbReference>
<dbReference type="Pfam" id="PF07694">
    <property type="entry name" value="5TM-5TMR_LYT"/>
    <property type="match status" value="1"/>
</dbReference>
<dbReference type="Pfam" id="PF02518">
    <property type="entry name" value="HATPase_c"/>
    <property type="match status" value="1"/>
</dbReference>
<dbReference type="Pfam" id="PF06580">
    <property type="entry name" value="His_kinase"/>
    <property type="match status" value="1"/>
</dbReference>
<dbReference type="SMART" id="SM00065">
    <property type="entry name" value="GAF"/>
    <property type="match status" value="1"/>
</dbReference>
<dbReference type="SMART" id="SM00387">
    <property type="entry name" value="HATPase_c"/>
    <property type="match status" value="1"/>
</dbReference>
<dbReference type="SUPFAM" id="SSF55874">
    <property type="entry name" value="ATPase domain of HSP90 chaperone/DNA topoisomerase II/histidine kinase"/>
    <property type="match status" value="1"/>
</dbReference>